<sequence length="423" mass="45149">MTEFSSFSAPKGVPDYVPPDSAQFVAVRDGLLAAARQAGYSHIELPIFEDTALFARGVGESTDVVSKEMYTFADRGDRSVTLRPEGTAGVVRAVIEHGLDRGALPVKLCYAGPFFRYERPQAGRYRQLQQVGVEAIGVDDPALDAEVIAIADAGFRSLGLDGFRLEITSLGDESCRPQYRELLQEFLFGLDLDEDTRRRAGINPLRVLDDKRPELRAMTASAPVLLDHLSDVAKQHFDTVLAHLDALGVPYVINPRMVRGLDYYTKTAFEFVHDGLGAQSGIGGGGRYDGLMHQLGGQDLSGIGFGLGVDRTVLALRAEGKTAGDSARCDVFGVPLGEAAKLRLAVLAGRLRAAGVRVDLAYGDRGLKGAMRAAARSGARVALVAGDRDIEAGTVAVKDLTTGEQVSVSMDSVVAEVISRLAG</sequence>
<comment type="catalytic activity">
    <reaction>
        <text>tRNA(His) + L-histidine + ATP = L-histidyl-tRNA(His) + AMP + diphosphate + H(+)</text>
        <dbReference type="Rhea" id="RHEA:17313"/>
        <dbReference type="Rhea" id="RHEA-COMP:9665"/>
        <dbReference type="Rhea" id="RHEA-COMP:9689"/>
        <dbReference type="ChEBI" id="CHEBI:15378"/>
        <dbReference type="ChEBI" id="CHEBI:30616"/>
        <dbReference type="ChEBI" id="CHEBI:33019"/>
        <dbReference type="ChEBI" id="CHEBI:57595"/>
        <dbReference type="ChEBI" id="CHEBI:78442"/>
        <dbReference type="ChEBI" id="CHEBI:78527"/>
        <dbReference type="ChEBI" id="CHEBI:456215"/>
        <dbReference type="EC" id="6.1.1.21"/>
    </reaction>
</comment>
<comment type="subunit">
    <text evidence="1">Homodimer.</text>
</comment>
<comment type="subcellular location">
    <subcellularLocation>
        <location evidence="1">Cytoplasm</location>
    </subcellularLocation>
</comment>
<comment type="similarity">
    <text evidence="2">Belongs to the class-II aminoacyl-tRNA synthetase family.</text>
</comment>
<keyword id="KW-0030">Aminoacyl-tRNA synthetase</keyword>
<keyword id="KW-0067">ATP-binding</keyword>
<keyword id="KW-0963">Cytoplasm</keyword>
<keyword id="KW-0436">Ligase</keyword>
<keyword id="KW-0547">Nucleotide-binding</keyword>
<keyword id="KW-0648">Protein biosynthesis</keyword>
<keyword id="KW-1185">Reference proteome</keyword>
<gene>
    <name type="primary">hisS</name>
    <name type="ordered locus">MT2657</name>
</gene>
<reference key="1">
    <citation type="journal article" date="2002" name="J. Bacteriol.">
        <title>Whole-genome comparison of Mycobacterium tuberculosis clinical and laboratory strains.</title>
        <authorList>
            <person name="Fleischmann R.D."/>
            <person name="Alland D."/>
            <person name="Eisen J.A."/>
            <person name="Carpenter L."/>
            <person name="White O."/>
            <person name="Peterson J.D."/>
            <person name="DeBoy R.T."/>
            <person name="Dodson R.J."/>
            <person name="Gwinn M.L."/>
            <person name="Haft D.H."/>
            <person name="Hickey E.K."/>
            <person name="Kolonay J.F."/>
            <person name="Nelson W.C."/>
            <person name="Umayam L.A."/>
            <person name="Ermolaeva M.D."/>
            <person name="Salzberg S.L."/>
            <person name="Delcher A."/>
            <person name="Utterback T.R."/>
            <person name="Weidman J.F."/>
            <person name="Khouri H.M."/>
            <person name="Gill J."/>
            <person name="Mikula A."/>
            <person name="Bishai W."/>
            <person name="Jacobs W.R. Jr."/>
            <person name="Venter J.C."/>
            <person name="Fraser C.M."/>
        </authorList>
    </citation>
    <scope>NUCLEOTIDE SEQUENCE [LARGE SCALE GENOMIC DNA]</scope>
    <source>
        <strain>CDC 1551 / Oshkosh</strain>
    </source>
</reference>
<accession>P9WFV4</accession>
<accession>L0TAA4</accession>
<accession>P67483</accession>
<accession>Q50641</accession>
<evidence type="ECO:0000250" key="1"/>
<evidence type="ECO:0000305" key="2"/>
<organism>
    <name type="scientific">Mycobacterium tuberculosis (strain CDC 1551 / Oshkosh)</name>
    <dbReference type="NCBI Taxonomy" id="83331"/>
    <lineage>
        <taxon>Bacteria</taxon>
        <taxon>Bacillati</taxon>
        <taxon>Actinomycetota</taxon>
        <taxon>Actinomycetes</taxon>
        <taxon>Mycobacteriales</taxon>
        <taxon>Mycobacteriaceae</taxon>
        <taxon>Mycobacterium</taxon>
        <taxon>Mycobacterium tuberculosis complex</taxon>
    </lineage>
</organism>
<dbReference type="EC" id="6.1.1.21"/>
<dbReference type="EMBL" id="AE000516">
    <property type="protein sequence ID" value="AAK46970.1"/>
    <property type="molecule type" value="Genomic_DNA"/>
</dbReference>
<dbReference type="PIR" id="C70725">
    <property type="entry name" value="C70725"/>
</dbReference>
<dbReference type="RefSeq" id="WP_003413365.1">
    <property type="nucleotide sequence ID" value="NZ_KK341227.1"/>
</dbReference>
<dbReference type="SMR" id="P9WFV4"/>
<dbReference type="GeneID" id="45426582"/>
<dbReference type="KEGG" id="mtc:MT2657"/>
<dbReference type="PATRIC" id="fig|83331.31.peg.2864"/>
<dbReference type="HOGENOM" id="CLU_025113_1_1_11"/>
<dbReference type="Proteomes" id="UP000001020">
    <property type="component" value="Chromosome"/>
</dbReference>
<dbReference type="GO" id="GO:0005737">
    <property type="term" value="C:cytoplasm"/>
    <property type="evidence" value="ECO:0007669"/>
    <property type="project" value="UniProtKB-SubCell"/>
</dbReference>
<dbReference type="GO" id="GO:0005524">
    <property type="term" value="F:ATP binding"/>
    <property type="evidence" value="ECO:0007669"/>
    <property type="project" value="UniProtKB-UniRule"/>
</dbReference>
<dbReference type="GO" id="GO:0004821">
    <property type="term" value="F:histidine-tRNA ligase activity"/>
    <property type="evidence" value="ECO:0007669"/>
    <property type="project" value="UniProtKB-UniRule"/>
</dbReference>
<dbReference type="GO" id="GO:0006427">
    <property type="term" value="P:histidyl-tRNA aminoacylation"/>
    <property type="evidence" value="ECO:0007669"/>
    <property type="project" value="UniProtKB-UniRule"/>
</dbReference>
<dbReference type="CDD" id="cd00773">
    <property type="entry name" value="HisRS-like_core"/>
    <property type="match status" value="1"/>
</dbReference>
<dbReference type="CDD" id="cd00859">
    <property type="entry name" value="HisRS_anticodon"/>
    <property type="match status" value="1"/>
</dbReference>
<dbReference type="FunFam" id="3.30.930.10:FF:000005">
    <property type="entry name" value="Histidine--tRNA ligase"/>
    <property type="match status" value="1"/>
</dbReference>
<dbReference type="Gene3D" id="3.40.50.800">
    <property type="entry name" value="Anticodon-binding domain"/>
    <property type="match status" value="1"/>
</dbReference>
<dbReference type="Gene3D" id="3.30.930.10">
    <property type="entry name" value="Bira Bifunctional Protein, Domain 2"/>
    <property type="match status" value="1"/>
</dbReference>
<dbReference type="HAMAP" id="MF_00127">
    <property type="entry name" value="His_tRNA_synth"/>
    <property type="match status" value="1"/>
</dbReference>
<dbReference type="InterPro" id="IPR006195">
    <property type="entry name" value="aa-tRNA-synth_II"/>
</dbReference>
<dbReference type="InterPro" id="IPR045864">
    <property type="entry name" value="aa-tRNA-synth_II/BPL/LPL"/>
</dbReference>
<dbReference type="InterPro" id="IPR004154">
    <property type="entry name" value="Anticodon-bd"/>
</dbReference>
<dbReference type="InterPro" id="IPR036621">
    <property type="entry name" value="Anticodon-bd_dom_sf"/>
</dbReference>
<dbReference type="InterPro" id="IPR015807">
    <property type="entry name" value="His-tRNA-ligase"/>
</dbReference>
<dbReference type="InterPro" id="IPR041715">
    <property type="entry name" value="HisRS-like_core"/>
</dbReference>
<dbReference type="InterPro" id="IPR004516">
    <property type="entry name" value="HisRS/HisZ"/>
</dbReference>
<dbReference type="InterPro" id="IPR033656">
    <property type="entry name" value="HisRS_anticodon"/>
</dbReference>
<dbReference type="NCBIfam" id="TIGR00442">
    <property type="entry name" value="hisS"/>
    <property type="match status" value="1"/>
</dbReference>
<dbReference type="PANTHER" id="PTHR43707:SF1">
    <property type="entry name" value="HISTIDINE--TRNA LIGASE, MITOCHONDRIAL-RELATED"/>
    <property type="match status" value="1"/>
</dbReference>
<dbReference type="PANTHER" id="PTHR43707">
    <property type="entry name" value="HISTIDYL-TRNA SYNTHETASE"/>
    <property type="match status" value="1"/>
</dbReference>
<dbReference type="Pfam" id="PF03129">
    <property type="entry name" value="HGTP_anticodon"/>
    <property type="match status" value="1"/>
</dbReference>
<dbReference type="Pfam" id="PF13393">
    <property type="entry name" value="tRNA-synt_His"/>
    <property type="match status" value="1"/>
</dbReference>
<dbReference type="PIRSF" id="PIRSF001549">
    <property type="entry name" value="His-tRNA_synth"/>
    <property type="match status" value="1"/>
</dbReference>
<dbReference type="SUPFAM" id="SSF52954">
    <property type="entry name" value="Class II aaRS ABD-related"/>
    <property type="match status" value="1"/>
</dbReference>
<dbReference type="SUPFAM" id="SSF55681">
    <property type="entry name" value="Class II aaRS and biotin synthetases"/>
    <property type="match status" value="1"/>
</dbReference>
<dbReference type="PROSITE" id="PS50862">
    <property type="entry name" value="AA_TRNA_LIGASE_II"/>
    <property type="match status" value="1"/>
</dbReference>
<proteinExistence type="inferred from homology"/>
<feature type="chain" id="PRO_0000428471" description="Histidine--tRNA ligase">
    <location>
        <begin position="1"/>
        <end position="423"/>
    </location>
</feature>
<protein>
    <recommendedName>
        <fullName>Histidine--tRNA ligase</fullName>
        <ecNumber>6.1.1.21</ecNumber>
    </recommendedName>
    <alternativeName>
        <fullName>Histidyl-tRNA synthetase</fullName>
        <shortName>HisRS</shortName>
    </alternativeName>
</protein>
<name>SYH_MYCTO</name>